<reference key="1">
    <citation type="journal article" date="2002" name="Environ. Microbiol.">
        <title>Complete genome sequence and comparative analysis of the metabolically versatile Pseudomonas putida KT2440.</title>
        <authorList>
            <person name="Nelson K.E."/>
            <person name="Weinel C."/>
            <person name="Paulsen I.T."/>
            <person name="Dodson R.J."/>
            <person name="Hilbert H."/>
            <person name="Martins dos Santos V.A.P."/>
            <person name="Fouts D.E."/>
            <person name="Gill S.R."/>
            <person name="Pop M."/>
            <person name="Holmes M."/>
            <person name="Brinkac L.M."/>
            <person name="Beanan M.J."/>
            <person name="DeBoy R.T."/>
            <person name="Daugherty S.C."/>
            <person name="Kolonay J.F."/>
            <person name="Madupu R."/>
            <person name="Nelson W.C."/>
            <person name="White O."/>
            <person name="Peterson J.D."/>
            <person name="Khouri H.M."/>
            <person name="Hance I."/>
            <person name="Chris Lee P."/>
            <person name="Holtzapple E.K."/>
            <person name="Scanlan D."/>
            <person name="Tran K."/>
            <person name="Moazzez A."/>
            <person name="Utterback T.R."/>
            <person name="Rizzo M."/>
            <person name="Lee K."/>
            <person name="Kosack D."/>
            <person name="Moestl D."/>
            <person name="Wedler H."/>
            <person name="Lauber J."/>
            <person name="Stjepandic D."/>
            <person name="Hoheisel J."/>
            <person name="Straetz M."/>
            <person name="Heim S."/>
            <person name="Kiewitz C."/>
            <person name="Eisen J.A."/>
            <person name="Timmis K.N."/>
            <person name="Duesterhoeft A."/>
            <person name="Tuemmler B."/>
            <person name="Fraser C.M."/>
        </authorList>
    </citation>
    <scope>NUCLEOTIDE SEQUENCE [LARGE SCALE GENOMIC DNA]</scope>
    <source>
        <strain>ATCC 47054 / DSM 6125 / CFBP 8728 / NCIMB 11950 / KT2440</strain>
    </source>
</reference>
<gene>
    <name evidence="1" type="primary">argJ</name>
    <name type="ordered locus">PP_1346</name>
</gene>
<accession>P59612</accession>
<keyword id="KW-0012">Acyltransferase</keyword>
<keyword id="KW-0028">Amino-acid biosynthesis</keyword>
<keyword id="KW-0055">Arginine biosynthesis</keyword>
<keyword id="KW-0068">Autocatalytic cleavage</keyword>
<keyword id="KW-0963">Cytoplasm</keyword>
<keyword id="KW-0511">Multifunctional enzyme</keyword>
<keyword id="KW-1185">Reference proteome</keyword>
<keyword id="KW-0808">Transferase</keyword>
<proteinExistence type="inferred from homology"/>
<evidence type="ECO:0000255" key="1">
    <source>
        <dbReference type="HAMAP-Rule" id="MF_01106"/>
    </source>
</evidence>
<feature type="chain" id="PRO_0000002215" description="Arginine biosynthesis bifunctional protein ArgJ alpha chain" evidence="1">
    <location>
        <begin position="1"/>
        <end position="188"/>
    </location>
</feature>
<feature type="chain" id="PRO_0000002216" description="Arginine biosynthesis bifunctional protein ArgJ beta chain" evidence="1">
    <location>
        <begin position="189"/>
        <end position="405"/>
    </location>
</feature>
<feature type="active site" description="Nucleophile" evidence="1">
    <location>
        <position position="189"/>
    </location>
</feature>
<feature type="binding site" evidence="1">
    <location>
        <position position="152"/>
    </location>
    <ligand>
        <name>substrate</name>
    </ligand>
</feature>
<feature type="binding site" evidence="1">
    <location>
        <position position="178"/>
    </location>
    <ligand>
        <name>substrate</name>
    </ligand>
</feature>
<feature type="binding site" evidence="1">
    <location>
        <position position="189"/>
    </location>
    <ligand>
        <name>substrate</name>
    </ligand>
</feature>
<feature type="binding site" evidence="1">
    <location>
        <position position="276"/>
    </location>
    <ligand>
        <name>substrate</name>
    </ligand>
</feature>
<feature type="binding site" evidence="1">
    <location>
        <position position="400"/>
    </location>
    <ligand>
        <name>substrate</name>
    </ligand>
</feature>
<feature type="binding site" evidence="1">
    <location>
        <position position="405"/>
    </location>
    <ligand>
        <name>substrate</name>
    </ligand>
</feature>
<feature type="site" description="Involved in the stabilization of negative charge on the oxyanion by the formation of the oxyanion hole" evidence="1">
    <location>
        <position position="115"/>
    </location>
</feature>
<feature type="site" description="Involved in the stabilization of negative charge on the oxyanion by the formation of the oxyanion hole" evidence="1">
    <location>
        <position position="116"/>
    </location>
</feature>
<feature type="site" description="Cleavage; by autolysis" evidence="1">
    <location>
        <begin position="188"/>
        <end position="189"/>
    </location>
</feature>
<sequence>MAVGLGPLPTLHPVPGFELGIASAGIKRPGRKDVVVMRCAEGSSVAGVFTLNAFCAAPVILSKQRVQGTVRYLLTNTGNANAGTGAPGLAAAERTCAKLAELAGVPAESVLPFSTGVIGEPLPVEKIEGALQAALDNLSENNWAEAATGIMTTDTLPKGASRQFQHDGVTVTVTGISKGAGMIRPNMATMLGYIATDAKVAPKVLKDLMLDGANKSFNRITIDGDTSTNDCCMLIATGKADLPEVTEASGALFEALKKAVFEVCMEVAQAIVRDGEGATKFVTVQVNGGGNHQECLDVGYAVAHSPLIKTALFASDPNWGRILAAVGRAGVPELDVSLIDVYLDSVCIASKGGRSPSYTEAQGSAVMAQEEITIRIELGRGQCSETIWTTDLSHEYVKINAEYRT</sequence>
<dbReference type="EC" id="2.3.1.35" evidence="1"/>
<dbReference type="EC" id="2.3.1.1" evidence="1"/>
<dbReference type="EMBL" id="AE015451">
    <property type="protein sequence ID" value="AAN66969.1"/>
    <property type="molecule type" value="Genomic_DNA"/>
</dbReference>
<dbReference type="RefSeq" id="NP_743505.1">
    <property type="nucleotide sequence ID" value="NC_002947.4"/>
</dbReference>
<dbReference type="RefSeq" id="WP_010952461.1">
    <property type="nucleotide sequence ID" value="NZ_CP169744.1"/>
</dbReference>
<dbReference type="SMR" id="P59612"/>
<dbReference type="STRING" id="160488.PP_1346"/>
<dbReference type="MEROPS" id="T05.001"/>
<dbReference type="PaxDb" id="160488-PP_1346"/>
<dbReference type="GeneID" id="83682220"/>
<dbReference type="KEGG" id="ppu:PP_1346"/>
<dbReference type="PATRIC" id="fig|160488.4.peg.1425"/>
<dbReference type="eggNOG" id="COG1364">
    <property type="taxonomic scope" value="Bacteria"/>
</dbReference>
<dbReference type="HOGENOM" id="CLU_027172_1_0_6"/>
<dbReference type="OrthoDB" id="9804242at2"/>
<dbReference type="PhylomeDB" id="P59612"/>
<dbReference type="BioCyc" id="PPUT160488:G1G01-1434-MONOMER"/>
<dbReference type="UniPathway" id="UPA00068">
    <property type="reaction ID" value="UER00106"/>
</dbReference>
<dbReference type="UniPathway" id="UPA00068">
    <property type="reaction ID" value="UER00111"/>
</dbReference>
<dbReference type="Proteomes" id="UP000000556">
    <property type="component" value="Chromosome"/>
</dbReference>
<dbReference type="GO" id="GO:0005737">
    <property type="term" value="C:cytoplasm"/>
    <property type="evidence" value="ECO:0007669"/>
    <property type="project" value="UniProtKB-SubCell"/>
</dbReference>
<dbReference type="GO" id="GO:0004358">
    <property type="term" value="F:glutamate N-acetyltransferase activity"/>
    <property type="evidence" value="ECO:0007669"/>
    <property type="project" value="UniProtKB-UniRule"/>
</dbReference>
<dbReference type="GO" id="GO:0004042">
    <property type="term" value="F:L-glutamate N-acetyltransferase activity"/>
    <property type="evidence" value="ECO:0007669"/>
    <property type="project" value="UniProtKB-UniRule"/>
</dbReference>
<dbReference type="GO" id="GO:0006526">
    <property type="term" value="P:L-arginine biosynthetic process"/>
    <property type="evidence" value="ECO:0007669"/>
    <property type="project" value="UniProtKB-UniRule"/>
</dbReference>
<dbReference type="GO" id="GO:0006592">
    <property type="term" value="P:ornithine biosynthetic process"/>
    <property type="evidence" value="ECO:0007669"/>
    <property type="project" value="TreeGrafter"/>
</dbReference>
<dbReference type="CDD" id="cd02152">
    <property type="entry name" value="OAT"/>
    <property type="match status" value="1"/>
</dbReference>
<dbReference type="FunFam" id="3.10.20.340:FF:000001">
    <property type="entry name" value="Arginine biosynthesis bifunctional protein ArgJ, chloroplastic"/>
    <property type="match status" value="1"/>
</dbReference>
<dbReference type="FunFam" id="3.60.70.12:FF:000001">
    <property type="entry name" value="Arginine biosynthesis bifunctional protein ArgJ, chloroplastic"/>
    <property type="match status" value="1"/>
</dbReference>
<dbReference type="Gene3D" id="3.10.20.340">
    <property type="entry name" value="ArgJ beta chain, C-terminal domain"/>
    <property type="match status" value="1"/>
</dbReference>
<dbReference type="Gene3D" id="3.60.70.12">
    <property type="entry name" value="L-amino peptidase D-ALA esterase/amidase"/>
    <property type="match status" value="1"/>
</dbReference>
<dbReference type="HAMAP" id="MF_01106">
    <property type="entry name" value="ArgJ"/>
    <property type="match status" value="1"/>
</dbReference>
<dbReference type="InterPro" id="IPR002813">
    <property type="entry name" value="Arg_biosynth_ArgJ"/>
</dbReference>
<dbReference type="InterPro" id="IPR016117">
    <property type="entry name" value="ArgJ-like_dom_sf"/>
</dbReference>
<dbReference type="InterPro" id="IPR042195">
    <property type="entry name" value="ArgJ_beta_C"/>
</dbReference>
<dbReference type="NCBIfam" id="TIGR00120">
    <property type="entry name" value="ArgJ"/>
    <property type="match status" value="1"/>
</dbReference>
<dbReference type="NCBIfam" id="NF003802">
    <property type="entry name" value="PRK05388.1"/>
    <property type="match status" value="1"/>
</dbReference>
<dbReference type="PANTHER" id="PTHR23100">
    <property type="entry name" value="ARGININE BIOSYNTHESIS BIFUNCTIONAL PROTEIN ARGJ"/>
    <property type="match status" value="1"/>
</dbReference>
<dbReference type="PANTHER" id="PTHR23100:SF0">
    <property type="entry name" value="ARGININE BIOSYNTHESIS BIFUNCTIONAL PROTEIN ARGJ, MITOCHONDRIAL"/>
    <property type="match status" value="1"/>
</dbReference>
<dbReference type="Pfam" id="PF01960">
    <property type="entry name" value="ArgJ"/>
    <property type="match status" value="1"/>
</dbReference>
<dbReference type="SUPFAM" id="SSF56266">
    <property type="entry name" value="DmpA/ArgJ-like"/>
    <property type="match status" value="1"/>
</dbReference>
<name>ARGJ_PSEPK</name>
<organism>
    <name type="scientific">Pseudomonas putida (strain ATCC 47054 / DSM 6125 / CFBP 8728 / NCIMB 11950 / KT2440)</name>
    <dbReference type="NCBI Taxonomy" id="160488"/>
    <lineage>
        <taxon>Bacteria</taxon>
        <taxon>Pseudomonadati</taxon>
        <taxon>Pseudomonadota</taxon>
        <taxon>Gammaproteobacteria</taxon>
        <taxon>Pseudomonadales</taxon>
        <taxon>Pseudomonadaceae</taxon>
        <taxon>Pseudomonas</taxon>
    </lineage>
</organism>
<protein>
    <recommendedName>
        <fullName evidence="1">Arginine biosynthesis bifunctional protein ArgJ</fullName>
    </recommendedName>
    <domain>
        <recommendedName>
            <fullName evidence="1">Glutamate N-acetyltransferase</fullName>
            <ecNumber evidence="1">2.3.1.35</ecNumber>
        </recommendedName>
        <alternativeName>
            <fullName evidence="1">Ornithine acetyltransferase</fullName>
            <shortName evidence="1">OATase</shortName>
        </alternativeName>
        <alternativeName>
            <fullName evidence="1">Ornithine transacetylase</fullName>
        </alternativeName>
    </domain>
    <domain>
        <recommendedName>
            <fullName evidence="1">Amino-acid acetyltransferase</fullName>
            <ecNumber evidence="1">2.3.1.1</ecNumber>
        </recommendedName>
        <alternativeName>
            <fullName evidence="1">N-acetylglutamate synthase</fullName>
            <shortName evidence="1">AGSase</shortName>
        </alternativeName>
    </domain>
    <component>
        <recommendedName>
            <fullName evidence="1">Arginine biosynthesis bifunctional protein ArgJ alpha chain</fullName>
        </recommendedName>
    </component>
    <component>
        <recommendedName>
            <fullName evidence="1">Arginine biosynthesis bifunctional protein ArgJ beta chain</fullName>
        </recommendedName>
    </component>
</protein>
<comment type="function">
    <text evidence="1">Catalyzes two activities which are involved in the cyclic version of arginine biosynthesis: the synthesis of N-acetylglutamate from glutamate and acetyl-CoA as the acetyl donor, and of ornithine by transacetylation between N(2)-acetylornithine and glutamate.</text>
</comment>
<comment type="catalytic activity">
    <reaction evidence="1">
        <text>N(2)-acetyl-L-ornithine + L-glutamate = N-acetyl-L-glutamate + L-ornithine</text>
        <dbReference type="Rhea" id="RHEA:15349"/>
        <dbReference type="ChEBI" id="CHEBI:29985"/>
        <dbReference type="ChEBI" id="CHEBI:44337"/>
        <dbReference type="ChEBI" id="CHEBI:46911"/>
        <dbReference type="ChEBI" id="CHEBI:57805"/>
        <dbReference type="EC" id="2.3.1.35"/>
    </reaction>
</comment>
<comment type="catalytic activity">
    <reaction evidence="1">
        <text>L-glutamate + acetyl-CoA = N-acetyl-L-glutamate + CoA + H(+)</text>
        <dbReference type="Rhea" id="RHEA:24292"/>
        <dbReference type="ChEBI" id="CHEBI:15378"/>
        <dbReference type="ChEBI" id="CHEBI:29985"/>
        <dbReference type="ChEBI" id="CHEBI:44337"/>
        <dbReference type="ChEBI" id="CHEBI:57287"/>
        <dbReference type="ChEBI" id="CHEBI:57288"/>
        <dbReference type="EC" id="2.3.1.1"/>
    </reaction>
</comment>
<comment type="pathway">
    <text evidence="1">Amino-acid biosynthesis; L-arginine biosynthesis; L-ornithine and N-acetyl-L-glutamate from L-glutamate and N(2)-acetyl-L-ornithine (cyclic): step 1/1.</text>
</comment>
<comment type="pathway">
    <text evidence="1">Amino-acid biosynthesis; L-arginine biosynthesis; N(2)-acetyl-L-ornithine from L-glutamate: step 1/4.</text>
</comment>
<comment type="subunit">
    <text evidence="1">Heterotetramer of two alpha and two beta chains.</text>
</comment>
<comment type="subcellular location">
    <subcellularLocation>
        <location evidence="1">Cytoplasm</location>
    </subcellularLocation>
</comment>
<comment type="similarity">
    <text evidence="1">Belongs to the ArgJ family.</text>
</comment>